<organism>
    <name type="scientific">Staphylococcus aureus (strain JH9)</name>
    <dbReference type="NCBI Taxonomy" id="359786"/>
    <lineage>
        <taxon>Bacteria</taxon>
        <taxon>Bacillati</taxon>
        <taxon>Bacillota</taxon>
        <taxon>Bacilli</taxon>
        <taxon>Bacillales</taxon>
        <taxon>Staphylococcaceae</taxon>
        <taxon>Staphylococcus</taxon>
    </lineage>
</organism>
<reference key="1">
    <citation type="submission" date="2007-05" db="EMBL/GenBank/DDBJ databases">
        <title>Complete sequence of chromosome of Staphylococcus aureus subsp. aureus JH9.</title>
        <authorList>
            <consortium name="US DOE Joint Genome Institute"/>
            <person name="Copeland A."/>
            <person name="Lucas S."/>
            <person name="Lapidus A."/>
            <person name="Barry K."/>
            <person name="Detter J.C."/>
            <person name="Glavina del Rio T."/>
            <person name="Hammon N."/>
            <person name="Israni S."/>
            <person name="Pitluck S."/>
            <person name="Chain P."/>
            <person name="Malfatti S."/>
            <person name="Shin M."/>
            <person name="Vergez L."/>
            <person name="Schmutz J."/>
            <person name="Larimer F."/>
            <person name="Land M."/>
            <person name="Hauser L."/>
            <person name="Kyrpides N."/>
            <person name="Kim E."/>
            <person name="Tomasz A."/>
            <person name="Richardson P."/>
        </authorList>
    </citation>
    <scope>NUCLEOTIDE SEQUENCE [LARGE SCALE GENOMIC DNA]</scope>
    <source>
        <strain>JH9</strain>
    </source>
</reference>
<gene>
    <name evidence="1" type="primary">rpmE2</name>
    <name type="ordered locus">SaurJH9_2156</name>
</gene>
<dbReference type="EMBL" id="CP000703">
    <property type="protein sequence ID" value="ABQ49938.1"/>
    <property type="molecule type" value="Genomic_DNA"/>
</dbReference>
<dbReference type="RefSeq" id="WP_000808968.1">
    <property type="nucleotide sequence ID" value="NC_009487.1"/>
</dbReference>
<dbReference type="SMR" id="A5IUR5"/>
<dbReference type="KEGG" id="saj:SaurJH9_2156"/>
<dbReference type="HOGENOM" id="CLU_114306_2_2_9"/>
<dbReference type="GO" id="GO:1990904">
    <property type="term" value="C:ribonucleoprotein complex"/>
    <property type="evidence" value="ECO:0007669"/>
    <property type="project" value="UniProtKB-KW"/>
</dbReference>
<dbReference type="GO" id="GO:0005840">
    <property type="term" value="C:ribosome"/>
    <property type="evidence" value="ECO:0007669"/>
    <property type="project" value="UniProtKB-KW"/>
</dbReference>
<dbReference type="GO" id="GO:0003735">
    <property type="term" value="F:structural constituent of ribosome"/>
    <property type="evidence" value="ECO:0007669"/>
    <property type="project" value="InterPro"/>
</dbReference>
<dbReference type="GO" id="GO:0006412">
    <property type="term" value="P:translation"/>
    <property type="evidence" value="ECO:0007669"/>
    <property type="project" value="UniProtKB-UniRule"/>
</dbReference>
<dbReference type="Gene3D" id="4.10.830.30">
    <property type="entry name" value="Ribosomal protein L31"/>
    <property type="match status" value="1"/>
</dbReference>
<dbReference type="HAMAP" id="MF_00502">
    <property type="entry name" value="Ribosomal_bL31_2"/>
    <property type="match status" value="1"/>
</dbReference>
<dbReference type="InterPro" id="IPR034704">
    <property type="entry name" value="Ribosomal_bL28/bL31-like_sf"/>
</dbReference>
<dbReference type="InterPro" id="IPR002150">
    <property type="entry name" value="Ribosomal_bL31"/>
</dbReference>
<dbReference type="InterPro" id="IPR027493">
    <property type="entry name" value="Ribosomal_bL31_B"/>
</dbReference>
<dbReference type="InterPro" id="IPR042105">
    <property type="entry name" value="Ribosomal_bL31_sf"/>
</dbReference>
<dbReference type="NCBIfam" id="TIGR00105">
    <property type="entry name" value="L31"/>
    <property type="match status" value="1"/>
</dbReference>
<dbReference type="NCBIfam" id="NF002462">
    <property type="entry name" value="PRK01678.1"/>
    <property type="match status" value="1"/>
</dbReference>
<dbReference type="PANTHER" id="PTHR33280">
    <property type="entry name" value="50S RIBOSOMAL PROTEIN L31, CHLOROPLASTIC"/>
    <property type="match status" value="1"/>
</dbReference>
<dbReference type="PANTHER" id="PTHR33280:SF1">
    <property type="entry name" value="LARGE RIBOSOMAL SUBUNIT PROTEIN BL31C"/>
    <property type="match status" value="1"/>
</dbReference>
<dbReference type="Pfam" id="PF01197">
    <property type="entry name" value="Ribosomal_L31"/>
    <property type="match status" value="1"/>
</dbReference>
<dbReference type="PRINTS" id="PR01249">
    <property type="entry name" value="RIBOSOMALL31"/>
</dbReference>
<dbReference type="SUPFAM" id="SSF143800">
    <property type="entry name" value="L28p-like"/>
    <property type="match status" value="1"/>
</dbReference>
<dbReference type="PROSITE" id="PS01143">
    <property type="entry name" value="RIBOSOMAL_L31"/>
    <property type="match status" value="1"/>
</dbReference>
<proteinExistence type="inferred from homology"/>
<sequence>MKQGIHPEYHQVIFLDTTTNFKFLSGSTKTSSEMMEWEDGKEYPVIRLDISSDSHPFYTGRQKFAAADGRVERFNKKFGLKSNN</sequence>
<feature type="chain" id="PRO_1000081461" description="Large ribosomal subunit protein bL31B">
    <location>
        <begin position="1"/>
        <end position="84"/>
    </location>
</feature>
<keyword id="KW-0687">Ribonucleoprotein</keyword>
<keyword id="KW-0689">Ribosomal protein</keyword>
<evidence type="ECO:0000255" key="1">
    <source>
        <dbReference type="HAMAP-Rule" id="MF_00502"/>
    </source>
</evidence>
<evidence type="ECO:0000305" key="2"/>
<protein>
    <recommendedName>
        <fullName evidence="1">Large ribosomal subunit protein bL31B</fullName>
    </recommendedName>
    <alternativeName>
        <fullName evidence="2">50S ribosomal protein L31 type B</fullName>
    </alternativeName>
</protein>
<accession>A5IUR5</accession>
<comment type="subunit">
    <text evidence="1">Part of the 50S ribosomal subunit.</text>
</comment>
<comment type="similarity">
    <text evidence="1">Belongs to the bacterial ribosomal protein bL31 family. Type B subfamily.</text>
</comment>
<name>RL31B_STAA9</name>